<feature type="chain" id="PRO_0000316371" description="Photosystem II protein D1" evidence="1">
    <location>
        <begin position="1"/>
        <end position="345"/>
    </location>
</feature>
<feature type="propeptide" id="PRO_0000316372" evidence="1">
    <location>
        <begin position="346"/>
        <end position="360"/>
    </location>
</feature>
<feature type="transmembrane region" description="Helical" evidence="1">
    <location>
        <begin position="30"/>
        <end position="47"/>
    </location>
</feature>
<feature type="transmembrane region" description="Helical" evidence="1">
    <location>
        <begin position="119"/>
        <end position="134"/>
    </location>
</feature>
<feature type="transmembrane region" description="Helical" evidence="1">
    <location>
        <begin position="143"/>
        <end position="157"/>
    </location>
</feature>
<feature type="transmembrane region" description="Helical" evidence="1">
    <location>
        <begin position="198"/>
        <end position="219"/>
    </location>
</feature>
<feature type="transmembrane region" description="Helical" evidence="1">
    <location>
        <begin position="275"/>
        <end position="289"/>
    </location>
</feature>
<feature type="binding site" description="axial binding residue" evidence="1">
    <location>
        <position position="119"/>
    </location>
    <ligand>
        <name>chlorophyll a</name>
        <dbReference type="ChEBI" id="CHEBI:58416"/>
        <label>ChlzD1</label>
    </ligand>
    <ligandPart>
        <name>Mg</name>
        <dbReference type="ChEBI" id="CHEBI:25107"/>
    </ligandPart>
</feature>
<feature type="binding site" evidence="1">
    <location>
        <position position="127"/>
    </location>
    <ligand>
        <name>pheophytin a</name>
        <dbReference type="ChEBI" id="CHEBI:136840"/>
        <label>D1</label>
    </ligand>
</feature>
<feature type="binding site" evidence="1">
    <location>
        <position position="171"/>
    </location>
    <ligand>
        <name>[CaMn4O5] cluster</name>
        <dbReference type="ChEBI" id="CHEBI:189552"/>
    </ligand>
</feature>
<feature type="binding site" evidence="1">
    <location>
        <position position="190"/>
    </location>
    <ligand>
        <name>[CaMn4O5] cluster</name>
        <dbReference type="ChEBI" id="CHEBI:189552"/>
    </ligand>
</feature>
<feature type="binding site" description="axial binding residue" evidence="1">
    <location>
        <position position="199"/>
    </location>
    <ligand>
        <name>chlorophyll a</name>
        <dbReference type="ChEBI" id="CHEBI:58416"/>
        <label>PD1</label>
    </ligand>
    <ligandPart>
        <name>Mg</name>
        <dbReference type="ChEBI" id="CHEBI:25107"/>
    </ligandPart>
</feature>
<feature type="binding site" evidence="1">
    <location>
        <position position="216"/>
    </location>
    <ligand>
        <name>a quinone</name>
        <dbReference type="ChEBI" id="CHEBI:132124"/>
        <label>B</label>
    </ligand>
</feature>
<feature type="binding site" evidence="1">
    <location>
        <position position="216"/>
    </location>
    <ligand>
        <name>Fe cation</name>
        <dbReference type="ChEBI" id="CHEBI:24875"/>
        <note>ligand shared with heterodimeric partner</note>
    </ligand>
</feature>
<feature type="binding site" evidence="1">
    <location>
        <begin position="265"/>
        <end position="266"/>
    </location>
    <ligand>
        <name>a quinone</name>
        <dbReference type="ChEBI" id="CHEBI:132124"/>
        <label>B</label>
    </ligand>
</feature>
<feature type="binding site" evidence="1">
    <location>
        <position position="273"/>
    </location>
    <ligand>
        <name>Fe cation</name>
        <dbReference type="ChEBI" id="CHEBI:24875"/>
        <note>ligand shared with heterodimeric partner</note>
    </ligand>
</feature>
<feature type="binding site" evidence="1">
    <location>
        <position position="333"/>
    </location>
    <ligand>
        <name>[CaMn4O5] cluster</name>
        <dbReference type="ChEBI" id="CHEBI:189552"/>
    </ligand>
</feature>
<feature type="binding site" evidence="1">
    <location>
        <position position="334"/>
    </location>
    <ligand>
        <name>[CaMn4O5] cluster</name>
        <dbReference type="ChEBI" id="CHEBI:189552"/>
    </ligand>
</feature>
<feature type="binding site" evidence="1">
    <location>
        <position position="343"/>
    </location>
    <ligand>
        <name>[CaMn4O5] cluster</name>
        <dbReference type="ChEBI" id="CHEBI:189552"/>
    </ligand>
</feature>
<feature type="binding site" evidence="1">
    <location>
        <position position="345"/>
    </location>
    <ligand>
        <name>[CaMn4O5] cluster</name>
        <dbReference type="ChEBI" id="CHEBI:189552"/>
    </ligand>
</feature>
<feature type="site" description="Tyrosine radical intermediate" evidence="1">
    <location>
        <position position="162"/>
    </location>
</feature>
<feature type="site" description="Stabilizes free radical intermediate" evidence="1">
    <location>
        <position position="191"/>
    </location>
</feature>
<feature type="site" description="Cleavage; by CtpA" evidence="1">
    <location>
        <begin position="345"/>
        <end position="346"/>
    </location>
</feature>
<evidence type="ECO:0000255" key="1">
    <source>
        <dbReference type="HAMAP-Rule" id="MF_01379"/>
    </source>
</evidence>
<evidence type="ECO:0000305" key="2"/>
<comment type="function">
    <text evidence="1">Photosystem II (PSII) is a light-driven water:plastoquinone oxidoreductase that uses light energy to abstract electrons from H(2)O, generating O(2) and a proton gradient subsequently used for ATP formation. It consists of a core antenna complex that captures photons, and an electron transfer chain that converts photonic excitation into a charge separation. The D1/D2 (PsbA/PsbD) reaction center heterodimer binds P680, the primary electron donor of PSII as well as several subsequent electron acceptors.</text>
</comment>
<comment type="catalytic activity">
    <reaction evidence="1">
        <text>2 a plastoquinone + 4 hnu + 2 H2O = 2 a plastoquinol + O2</text>
        <dbReference type="Rhea" id="RHEA:36359"/>
        <dbReference type="Rhea" id="RHEA-COMP:9561"/>
        <dbReference type="Rhea" id="RHEA-COMP:9562"/>
        <dbReference type="ChEBI" id="CHEBI:15377"/>
        <dbReference type="ChEBI" id="CHEBI:15379"/>
        <dbReference type="ChEBI" id="CHEBI:17757"/>
        <dbReference type="ChEBI" id="CHEBI:30212"/>
        <dbReference type="ChEBI" id="CHEBI:62192"/>
        <dbReference type="EC" id="1.10.3.9"/>
    </reaction>
</comment>
<comment type="cofactor">
    <text evidence="1">The D1/D2 heterodimer binds P680, chlorophylls that are the primary electron donor of PSII, and subsequent electron acceptors. It shares a non-heme iron and each subunit binds pheophytin, quinone, additional chlorophylls, carotenoids and lipids. D1 provides most of the ligands for the Mn4-Ca-O5 cluster of the oxygen-evolving complex (OEC). There is also a Cl(-1) ion associated with D1 and D2, which is required for oxygen evolution. The PSII complex binds additional chlorophylls, carotenoids and specific lipids.</text>
</comment>
<comment type="subunit">
    <text evidence="2">PSII is composed of 1 copy each of membrane proteins PsbA, PsbB, PsbC, PsbD, PsbE, PsbF, PsbH, PsbI, PsbJ, PsbK, PsbL, PsbM, PsbT, PsbX, PsbY, Psb30/Ycf12, peripheral proteins PsbO, CyanoQ (PsbQ), PsbU, PsbV and a large number of cofactors. It forms dimeric complexes.</text>
</comment>
<comment type="subcellular location">
    <subcellularLocation>
        <location evidence="1">Cellular thylakoid membrane</location>
        <topology evidence="1">Multi-pass membrane protein</topology>
    </subcellularLocation>
</comment>
<comment type="PTM">
    <text evidence="1">Tyr-162 forms a radical intermediate that is referred to as redox-active TyrZ, YZ or Y-Z.</text>
</comment>
<comment type="PTM">
    <text evidence="1">C-terminally processed by CtpA; processing is essential to allow assembly of the oxygen-evolving complex and thus photosynthetic growth.</text>
</comment>
<comment type="miscellaneous">
    <text evidence="1">Cyanobacteria usually contain more than 2 copies of the psbA gene.</text>
</comment>
<comment type="miscellaneous">
    <text evidence="1">2 of the reaction center chlorophylls (ChlD1 and ChlD2) are entirely coordinated by water.</text>
</comment>
<comment type="miscellaneous">
    <text evidence="1">Herbicides such as atrazine, BNT, diuron or ioxynil bind in the Q(B) binding site and block subsequent electron transfer.</text>
</comment>
<comment type="similarity">
    <text evidence="1">Belongs to the reaction center PufL/M/PsbA/D family.</text>
</comment>
<reference key="1">
    <citation type="journal article" date="2003" name="Nature">
        <title>Genome divergence in two Prochlorococcus ecotypes reflects oceanic niche differentiation.</title>
        <authorList>
            <person name="Rocap G."/>
            <person name="Larimer F.W."/>
            <person name="Lamerdin J.E."/>
            <person name="Malfatti S."/>
            <person name="Chain P."/>
            <person name="Ahlgren N.A."/>
            <person name="Arellano A."/>
            <person name="Coleman M."/>
            <person name="Hauser L."/>
            <person name="Hess W.R."/>
            <person name="Johnson Z.I."/>
            <person name="Land M.L."/>
            <person name="Lindell D."/>
            <person name="Post A.F."/>
            <person name="Regala W."/>
            <person name="Shah M."/>
            <person name="Shaw S.L."/>
            <person name="Steglich C."/>
            <person name="Sullivan M.B."/>
            <person name="Ting C.S."/>
            <person name="Tolonen A."/>
            <person name="Webb E.A."/>
            <person name="Zinser E.R."/>
            <person name="Chisholm S.W."/>
        </authorList>
    </citation>
    <scope>NUCLEOTIDE SEQUENCE [LARGE SCALE GENOMIC DNA]</scope>
    <source>
        <strain>CCMP1986 / NIES-2087 / MED4</strain>
    </source>
</reference>
<accession>Q7V365</accession>
<protein>
    <recommendedName>
        <fullName evidence="1">Photosystem II protein D1</fullName>
        <shortName evidence="1">PSII D1 protein</shortName>
        <ecNumber evidence="1">1.10.3.9</ecNumber>
    </recommendedName>
    <alternativeName>
        <fullName evidence="1">Photosystem II Q(B) protein</fullName>
    </alternativeName>
</protein>
<keyword id="KW-0106">Calcium</keyword>
<keyword id="KW-0148">Chlorophyll</keyword>
<keyword id="KW-0157">Chromophore</keyword>
<keyword id="KW-0249">Electron transport</keyword>
<keyword id="KW-0359">Herbicide resistance</keyword>
<keyword id="KW-0408">Iron</keyword>
<keyword id="KW-0460">Magnesium</keyword>
<keyword id="KW-0464">Manganese</keyword>
<keyword id="KW-0472">Membrane</keyword>
<keyword id="KW-0479">Metal-binding</keyword>
<keyword id="KW-0560">Oxidoreductase</keyword>
<keyword id="KW-0602">Photosynthesis</keyword>
<keyword id="KW-0604">Photosystem II</keyword>
<keyword id="KW-0793">Thylakoid</keyword>
<keyword id="KW-0812">Transmembrane</keyword>
<keyword id="KW-1133">Transmembrane helix</keyword>
<keyword id="KW-0813">Transport</keyword>
<gene>
    <name evidence="1" type="primary">psbA</name>
    <name type="ordered locus">PMM0223</name>
</gene>
<name>PSBA_PROMP</name>
<proteinExistence type="inferred from homology"/>
<organism>
    <name type="scientific">Prochlorococcus marinus subsp. pastoris (strain CCMP1986 / NIES-2087 / MED4)</name>
    <dbReference type="NCBI Taxonomy" id="59919"/>
    <lineage>
        <taxon>Bacteria</taxon>
        <taxon>Bacillati</taxon>
        <taxon>Cyanobacteriota</taxon>
        <taxon>Cyanophyceae</taxon>
        <taxon>Synechococcales</taxon>
        <taxon>Prochlorococcaceae</taxon>
        <taxon>Prochlorococcus</taxon>
    </lineage>
</organism>
<sequence length="360" mass="39636">MTTIQQQRTSLLKGWPQFCEWVTSTNNRIYVGWFGVLMIPCLLAAAACFIVAFIAAPPVDIDGIREPVAGSFLYGNNIISGAVVPSSNAIGLHFYPIWEAATVDEWLYNGGPYQLVIFHFLIGISAYMGRQWELSYRLGMRPWICVAYSAPVSAAFAVFLVYPFGQGSFSDGMPLGISGTFNFMFVFQAEHNILMHPFHMAGVAGMFGGSLFSAMHGSLVTSSLIRETTETESQNYGYKFGQEEETYNIVAAHGYFGRLIFQYASFNNSRSLHFFLAVFPVVCVWLTSMGICTMAFNLNGFNFNQSVVDANGKIVPTWGDVLNRANLGMEVMHERNAHNFPLDLAAAESTTVALTAPAIG</sequence>
<dbReference type="EC" id="1.10.3.9" evidence="1"/>
<dbReference type="EMBL" id="BX548174">
    <property type="protein sequence ID" value="CAE18682.1"/>
    <property type="molecule type" value="Genomic_DNA"/>
</dbReference>
<dbReference type="RefSeq" id="WP_011131862.1">
    <property type="nucleotide sequence ID" value="NC_005072.1"/>
</dbReference>
<dbReference type="SMR" id="Q7V365"/>
<dbReference type="STRING" id="59919.PMM0223"/>
<dbReference type="GeneID" id="60202008"/>
<dbReference type="KEGG" id="pmm:PMM0223"/>
<dbReference type="eggNOG" id="ENOG502Z87P">
    <property type="taxonomic scope" value="Bacteria"/>
</dbReference>
<dbReference type="HOGENOM" id="CLU_054206_1_0_3"/>
<dbReference type="OrthoDB" id="505356at2"/>
<dbReference type="Proteomes" id="UP000001026">
    <property type="component" value="Chromosome"/>
</dbReference>
<dbReference type="GO" id="GO:0009523">
    <property type="term" value="C:photosystem II"/>
    <property type="evidence" value="ECO:0007669"/>
    <property type="project" value="UniProtKB-KW"/>
</dbReference>
<dbReference type="GO" id="GO:0031676">
    <property type="term" value="C:plasma membrane-derived thylakoid membrane"/>
    <property type="evidence" value="ECO:0007669"/>
    <property type="project" value="UniProtKB-SubCell"/>
</dbReference>
<dbReference type="GO" id="GO:0016168">
    <property type="term" value="F:chlorophyll binding"/>
    <property type="evidence" value="ECO:0007669"/>
    <property type="project" value="UniProtKB-UniRule"/>
</dbReference>
<dbReference type="GO" id="GO:0045156">
    <property type="term" value="F:electron transporter, transferring electrons within the cyclic electron transport pathway of photosynthesis activity"/>
    <property type="evidence" value="ECO:0007669"/>
    <property type="project" value="InterPro"/>
</dbReference>
<dbReference type="GO" id="GO:0005506">
    <property type="term" value="F:iron ion binding"/>
    <property type="evidence" value="ECO:0007669"/>
    <property type="project" value="UniProtKB-UniRule"/>
</dbReference>
<dbReference type="GO" id="GO:0016682">
    <property type="term" value="F:oxidoreductase activity, acting on diphenols and related substances as donors, oxygen as acceptor"/>
    <property type="evidence" value="ECO:0007669"/>
    <property type="project" value="UniProtKB-UniRule"/>
</dbReference>
<dbReference type="GO" id="GO:0010242">
    <property type="term" value="F:oxygen evolving activity"/>
    <property type="evidence" value="ECO:0007669"/>
    <property type="project" value="UniProtKB-EC"/>
</dbReference>
<dbReference type="GO" id="GO:0009772">
    <property type="term" value="P:photosynthetic electron transport in photosystem II"/>
    <property type="evidence" value="ECO:0007669"/>
    <property type="project" value="InterPro"/>
</dbReference>
<dbReference type="GO" id="GO:0009635">
    <property type="term" value="P:response to herbicide"/>
    <property type="evidence" value="ECO:0007669"/>
    <property type="project" value="UniProtKB-KW"/>
</dbReference>
<dbReference type="FunFam" id="1.20.85.10:FF:000002">
    <property type="entry name" value="Photosystem II protein D1"/>
    <property type="match status" value="1"/>
</dbReference>
<dbReference type="Gene3D" id="1.20.85.10">
    <property type="entry name" value="Photosystem II protein D1-like"/>
    <property type="match status" value="1"/>
</dbReference>
<dbReference type="HAMAP" id="MF_01379">
    <property type="entry name" value="PSII_PsbA_D1"/>
    <property type="match status" value="1"/>
</dbReference>
<dbReference type="InterPro" id="IPR055266">
    <property type="entry name" value="D1/D2"/>
</dbReference>
<dbReference type="InterPro" id="IPR036854">
    <property type="entry name" value="Photo_II_D1/D2_sf"/>
</dbReference>
<dbReference type="InterPro" id="IPR000484">
    <property type="entry name" value="Photo_RC_L/M"/>
</dbReference>
<dbReference type="InterPro" id="IPR055265">
    <property type="entry name" value="Photo_RC_L/M_CS"/>
</dbReference>
<dbReference type="InterPro" id="IPR005867">
    <property type="entry name" value="PSII_D1"/>
</dbReference>
<dbReference type="NCBIfam" id="TIGR01151">
    <property type="entry name" value="psbA"/>
    <property type="match status" value="1"/>
</dbReference>
<dbReference type="PANTHER" id="PTHR33149:SF12">
    <property type="entry name" value="PHOTOSYSTEM II D2 PROTEIN"/>
    <property type="match status" value="1"/>
</dbReference>
<dbReference type="PANTHER" id="PTHR33149">
    <property type="entry name" value="PHOTOSYSTEM II PROTEIN D1"/>
    <property type="match status" value="1"/>
</dbReference>
<dbReference type="Pfam" id="PF00124">
    <property type="entry name" value="Photo_RC"/>
    <property type="match status" value="1"/>
</dbReference>
<dbReference type="PRINTS" id="PR00256">
    <property type="entry name" value="REACTNCENTRE"/>
</dbReference>
<dbReference type="SUPFAM" id="SSF81483">
    <property type="entry name" value="Bacterial photosystem II reaction centre, L and M subunits"/>
    <property type="match status" value="1"/>
</dbReference>
<dbReference type="PROSITE" id="PS00244">
    <property type="entry name" value="REACTION_CENTER"/>
    <property type="match status" value="1"/>
</dbReference>